<proteinExistence type="inferred from homology"/>
<comment type="function">
    <text evidence="1">Catalyzes the ATP-dependent 2-thiolation of cytidine in position 32 of tRNA, to form 2-thiocytidine (s(2)C32). The sulfur atoms are provided by the cysteine/cysteine desulfurase (IscS) system.</text>
</comment>
<comment type="catalytic activity">
    <reaction evidence="1">
        <text>cytidine(32) in tRNA + S-sulfanyl-L-cysteinyl-[cysteine desulfurase] + AH2 + ATP = 2-thiocytidine(32) in tRNA + L-cysteinyl-[cysteine desulfurase] + A + AMP + diphosphate + H(+)</text>
        <dbReference type="Rhea" id="RHEA:57048"/>
        <dbReference type="Rhea" id="RHEA-COMP:10288"/>
        <dbReference type="Rhea" id="RHEA-COMP:12157"/>
        <dbReference type="Rhea" id="RHEA-COMP:12158"/>
        <dbReference type="Rhea" id="RHEA-COMP:14821"/>
        <dbReference type="ChEBI" id="CHEBI:13193"/>
        <dbReference type="ChEBI" id="CHEBI:15378"/>
        <dbReference type="ChEBI" id="CHEBI:17499"/>
        <dbReference type="ChEBI" id="CHEBI:29950"/>
        <dbReference type="ChEBI" id="CHEBI:30616"/>
        <dbReference type="ChEBI" id="CHEBI:33019"/>
        <dbReference type="ChEBI" id="CHEBI:61963"/>
        <dbReference type="ChEBI" id="CHEBI:82748"/>
        <dbReference type="ChEBI" id="CHEBI:141453"/>
        <dbReference type="ChEBI" id="CHEBI:456215"/>
    </reaction>
    <physiologicalReaction direction="left-to-right" evidence="1">
        <dbReference type="Rhea" id="RHEA:57049"/>
    </physiologicalReaction>
</comment>
<comment type="cofactor">
    <cofactor evidence="1">
        <name>Mg(2+)</name>
        <dbReference type="ChEBI" id="CHEBI:18420"/>
    </cofactor>
</comment>
<comment type="cofactor">
    <cofactor evidence="1">
        <name>[4Fe-4S] cluster</name>
        <dbReference type="ChEBI" id="CHEBI:49883"/>
    </cofactor>
    <text evidence="1">Binds 1 [4Fe-4S] cluster per subunit. The cluster is chelated by three Cys residues, the fourth Fe has a free coordination site that may bind a sulfur atom transferred from the persulfide of IscS.</text>
</comment>
<comment type="pathway">
    <text evidence="1">tRNA modification.</text>
</comment>
<comment type="subunit">
    <text evidence="1">Homodimer.</text>
</comment>
<comment type="subcellular location">
    <subcellularLocation>
        <location evidence="1">Cytoplasm</location>
    </subcellularLocation>
</comment>
<comment type="miscellaneous">
    <text evidence="1">The thiolation reaction likely consists of two steps: a first activation step by ATP to form an adenylated intermediate of the target base of tRNA, and a second nucleophilic substitution step of the sulfur (S) atom supplied by the hydrosulfide attached to the Fe-S cluster.</text>
</comment>
<comment type="similarity">
    <text evidence="1">Belongs to the TtcA family.</text>
</comment>
<keyword id="KW-0004">4Fe-4S</keyword>
<keyword id="KW-0067">ATP-binding</keyword>
<keyword id="KW-0963">Cytoplasm</keyword>
<keyword id="KW-0408">Iron</keyword>
<keyword id="KW-0411">Iron-sulfur</keyword>
<keyword id="KW-0460">Magnesium</keyword>
<keyword id="KW-0479">Metal-binding</keyword>
<keyword id="KW-0547">Nucleotide-binding</keyword>
<keyword id="KW-1185">Reference proteome</keyword>
<keyword id="KW-0694">RNA-binding</keyword>
<keyword id="KW-0808">Transferase</keyword>
<keyword id="KW-0819">tRNA processing</keyword>
<keyword id="KW-0820">tRNA-binding</keyword>
<protein>
    <recommendedName>
        <fullName evidence="1">tRNA-cytidine(32) 2-sulfurtransferase</fullName>
        <ecNumber evidence="1">2.8.1.-</ecNumber>
    </recommendedName>
    <alternativeName>
        <fullName evidence="1">Two-thiocytidine biosynthesis protein A</fullName>
    </alternativeName>
    <alternativeName>
        <fullName evidence="1">tRNA 2-thiocytidine biosynthesis protein TtcA</fullName>
    </alternativeName>
</protein>
<reference key="1">
    <citation type="submission" date="2007-08" db="EMBL/GenBank/DDBJ databases">
        <title>Complete sequence of Shewanella sediminis HAW-EB3.</title>
        <authorList>
            <consortium name="US DOE Joint Genome Institute"/>
            <person name="Copeland A."/>
            <person name="Lucas S."/>
            <person name="Lapidus A."/>
            <person name="Barry K."/>
            <person name="Glavina del Rio T."/>
            <person name="Dalin E."/>
            <person name="Tice H."/>
            <person name="Pitluck S."/>
            <person name="Chertkov O."/>
            <person name="Brettin T."/>
            <person name="Bruce D."/>
            <person name="Detter J.C."/>
            <person name="Han C."/>
            <person name="Schmutz J."/>
            <person name="Larimer F."/>
            <person name="Land M."/>
            <person name="Hauser L."/>
            <person name="Kyrpides N."/>
            <person name="Kim E."/>
            <person name="Zhao J.-S."/>
            <person name="Richardson P."/>
        </authorList>
    </citation>
    <scope>NUCLEOTIDE SEQUENCE [LARGE SCALE GENOMIC DNA]</scope>
    <source>
        <strain>HAW-EB3</strain>
    </source>
</reference>
<sequence>MSEDLSKLHTSRMNKLQRKLRGEVGKAIGDYNMIEEGDRVMCCLSGGKDSYAMLDILLNLQQRAPIKFEIVAVNLDQKQPGFPEEVLPAYLDTLNVPYHIIEKDTYSVVREKIPEGQKTCSLCSRLRRGTLYGFAQKIGATKIALGHHRDDIIETLFLNMFFAGKQKAMPPKLLSDDGANMVIRPLAYSREKDIAEYAELKAFPIIPCNLCGSQENLKRAEVKDMLNLWDEHHPGRIESIFTAMQNTSPSQGVDREQFDFNSLQRDADAPLRGDVAESDLPAFDFVDVANNGHIDLDAAAKSRSENKIDIVSTYTP</sequence>
<name>TTCA_SHESH</name>
<accession>A8FVF7</accession>
<gene>
    <name evidence="1" type="primary">ttcA</name>
    <name type="ordered locus">Ssed_2221</name>
</gene>
<feature type="chain" id="PRO_0000348842" description="tRNA-cytidine(32) 2-sulfurtransferase">
    <location>
        <begin position="1"/>
        <end position="316"/>
    </location>
</feature>
<feature type="short sequence motif" description="PP-loop motif" evidence="1">
    <location>
        <begin position="45"/>
        <end position="50"/>
    </location>
</feature>
<feature type="binding site" evidence="1">
    <location>
        <position position="120"/>
    </location>
    <ligand>
        <name>[4Fe-4S] cluster</name>
        <dbReference type="ChEBI" id="CHEBI:49883"/>
    </ligand>
</feature>
<feature type="binding site" evidence="1">
    <location>
        <position position="123"/>
    </location>
    <ligand>
        <name>[4Fe-4S] cluster</name>
        <dbReference type="ChEBI" id="CHEBI:49883"/>
    </ligand>
</feature>
<feature type="binding site" evidence="1">
    <location>
        <position position="211"/>
    </location>
    <ligand>
        <name>[4Fe-4S] cluster</name>
        <dbReference type="ChEBI" id="CHEBI:49883"/>
    </ligand>
</feature>
<evidence type="ECO:0000255" key="1">
    <source>
        <dbReference type="HAMAP-Rule" id="MF_01850"/>
    </source>
</evidence>
<dbReference type="EC" id="2.8.1.-" evidence="1"/>
<dbReference type="EMBL" id="CP000821">
    <property type="protein sequence ID" value="ABV36830.1"/>
    <property type="molecule type" value="Genomic_DNA"/>
</dbReference>
<dbReference type="RefSeq" id="WP_012142565.1">
    <property type="nucleotide sequence ID" value="NC_009831.1"/>
</dbReference>
<dbReference type="SMR" id="A8FVF7"/>
<dbReference type="STRING" id="425104.Ssed_2221"/>
<dbReference type="KEGG" id="sse:Ssed_2221"/>
<dbReference type="eggNOG" id="COG0037">
    <property type="taxonomic scope" value="Bacteria"/>
</dbReference>
<dbReference type="HOGENOM" id="CLU_026481_0_0_6"/>
<dbReference type="OrthoDB" id="9801054at2"/>
<dbReference type="Proteomes" id="UP000002015">
    <property type="component" value="Chromosome"/>
</dbReference>
<dbReference type="GO" id="GO:0005737">
    <property type="term" value="C:cytoplasm"/>
    <property type="evidence" value="ECO:0007669"/>
    <property type="project" value="UniProtKB-SubCell"/>
</dbReference>
<dbReference type="GO" id="GO:0051539">
    <property type="term" value="F:4 iron, 4 sulfur cluster binding"/>
    <property type="evidence" value="ECO:0007669"/>
    <property type="project" value="UniProtKB-UniRule"/>
</dbReference>
<dbReference type="GO" id="GO:0005524">
    <property type="term" value="F:ATP binding"/>
    <property type="evidence" value="ECO:0007669"/>
    <property type="project" value="UniProtKB-UniRule"/>
</dbReference>
<dbReference type="GO" id="GO:0000287">
    <property type="term" value="F:magnesium ion binding"/>
    <property type="evidence" value="ECO:0007669"/>
    <property type="project" value="UniProtKB-UniRule"/>
</dbReference>
<dbReference type="GO" id="GO:0016783">
    <property type="term" value="F:sulfurtransferase activity"/>
    <property type="evidence" value="ECO:0007669"/>
    <property type="project" value="UniProtKB-UniRule"/>
</dbReference>
<dbReference type="GO" id="GO:0000049">
    <property type="term" value="F:tRNA binding"/>
    <property type="evidence" value="ECO:0007669"/>
    <property type="project" value="UniProtKB-KW"/>
</dbReference>
<dbReference type="GO" id="GO:0034227">
    <property type="term" value="P:tRNA thio-modification"/>
    <property type="evidence" value="ECO:0007669"/>
    <property type="project" value="UniProtKB-UniRule"/>
</dbReference>
<dbReference type="CDD" id="cd24138">
    <property type="entry name" value="TtcA-like"/>
    <property type="match status" value="1"/>
</dbReference>
<dbReference type="Gene3D" id="3.40.50.620">
    <property type="entry name" value="HUPs"/>
    <property type="match status" value="1"/>
</dbReference>
<dbReference type="HAMAP" id="MF_01850">
    <property type="entry name" value="TtcA"/>
    <property type="match status" value="1"/>
</dbReference>
<dbReference type="InterPro" id="IPR014729">
    <property type="entry name" value="Rossmann-like_a/b/a_fold"/>
</dbReference>
<dbReference type="InterPro" id="IPR011063">
    <property type="entry name" value="TilS/TtcA_N"/>
</dbReference>
<dbReference type="InterPro" id="IPR012089">
    <property type="entry name" value="tRNA_Cyd_32_2_STrfase"/>
</dbReference>
<dbReference type="InterPro" id="IPR035107">
    <property type="entry name" value="tRNA_thiolation_TtcA_Ctu1"/>
</dbReference>
<dbReference type="NCBIfam" id="NF007972">
    <property type="entry name" value="PRK10696.1"/>
    <property type="match status" value="1"/>
</dbReference>
<dbReference type="PANTHER" id="PTHR43686:SF1">
    <property type="entry name" value="AMINOTRAN_5 DOMAIN-CONTAINING PROTEIN"/>
    <property type="match status" value="1"/>
</dbReference>
<dbReference type="PANTHER" id="PTHR43686">
    <property type="entry name" value="SULFURTRANSFERASE-RELATED"/>
    <property type="match status" value="1"/>
</dbReference>
<dbReference type="Pfam" id="PF01171">
    <property type="entry name" value="ATP_bind_3"/>
    <property type="match status" value="1"/>
</dbReference>
<dbReference type="PIRSF" id="PIRSF004976">
    <property type="entry name" value="ATPase_YdaO"/>
    <property type="match status" value="1"/>
</dbReference>
<dbReference type="SUPFAM" id="SSF52402">
    <property type="entry name" value="Adenine nucleotide alpha hydrolases-like"/>
    <property type="match status" value="1"/>
</dbReference>
<organism>
    <name type="scientific">Shewanella sediminis (strain HAW-EB3)</name>
    <dbReference type="NCBI Taxonomy" id="425104"/>
    <lineage>
        <taxon>Bacteria</taxon>
        <taxon>Pseudomonadati</taxon>
        <taxon>Pseudomonadota</taxon>
        <taxon>Gammaproteobacteria</taxon>
        <taxon>Alteromonadales</taxon>
        <taxon>Shewanellaceae</taxon>
        <taxon>Shewanella</taxon>
    </lineage>
</organism>